<sequence length="438" mass="49867">MESQQLHQNPHCPHGSAYASVTSKEVPSNQDPLAVSASNLPEFDRDSTKVNSQEETTPGTSAVPENHHHVSPQPASVPPPQNGQYQQHGMMTPNKAMASNWAHYQQPSMMTCSHYQTSPAYYQPDPHYPLPQYIPPLSTSSPDPIDSQDQHSEVPQAKTKVRNNVLPPHPHTSEENFSTWVKFYIRFLKNSNLGDIIPNDQGEIKRQMTYEEHAYIYNTFQAFAPFHLLPTWVKQILEINYSDILTVLCKSVSKMQTNNQELKDWIALANLEYNGSTSADTFEITVSTIIQRLKENNINVSDRLACQLILKGLSGDFKYLRNQYRTKTNMKLSQLFAEIQLIYDENKIMNLNKPSQYKQHSEYKNVSRTSPNTTNTKVTTRNYHRTNSSKPRAAKAHNIATSSKFSRVNNDHINESTVSSQYLSDDNELSLRPATERI</sequence>
<dbReference type="EMBL" id="Z75251">
    <property type="protein sequence ID" value="CAA99669.1"/>
    <property type="molecule type" value="Genomic_DNA"/>
</dbReference>
<dbReference type="EMBL" id="Z75252">
    <property type="protein sequence ID" value="CAA99672.1"/>
    <property type="molecule type" value="Genomic_DNA"/>
</dbReference>
<dbReference type="EMBL" id="BK006948">
    <property type="protein sequence ID" value="DAA11105.1"/>
    <property type="molecule type" value="Genomic_DNA"/>
</dbReference>
<dbReference type="PIR" id="S70232">
    <property type="entry name" value="S70232"/>
</dbReference>
<dbReference type="RefSeq" id="NP_620390.1">
    <molecule id="Q12293-1"/>
    <property type="nucleotide sequence ID" value="NM_001184389.1"/>
</dbReference>
<dbReference type="SMR" id="Q12293"/>
<dbReference type="BioGRID" id="34726">
    <property type="interactions" value="2"/>
</dbReference>
<dbReference type="FunCoup" id="Q12293">
    <property type="interactions" value="56"/>
</dbReference>
<dbReference type="MEROPS" id="A11.003"/>
<dbReference type="PaxDb" id="4932-YOR343W-A"/>
<dbReference type="PeptideAtlas" id="Q12293"/>
<dbReference type="GeneID" id="854522"/>
<dbReference type="KEGG" id="sce:YOR343W-A"/>
<dbReference type="AGR" id="SGD:S000007355"/>
<dbReference type="SGD" id="S000007355">
    <property type="gene designation" value="YOR343W-A"/>
</dbReference>
<dbReference type="VEuPathDB" id="FungiDB:YOR343W-A"/>
<dbReference type="eggNOG" id="KOG0017">
    <property type="taxonomic scope" value="Eukaryota"/>
</dbReference>
<dbReference type="HOGENOM" id="CLU_045291_1_0_1"/>
<dbReference type="InParanoid" id="Q12293"/>
<dbReference type="OrthoDB" id="4046078at2759"/>
<dbReference type="BioGRID-ORCS" id="854522">
    <property type="hits" value="0 hits in 10 CRISPR screens"/>
</dbReference>
<dbReference type="Proteomes" id="UP000002311">
    <property type="component" value="Chromosome XV"/>
</dbReference>
<dbReference type="RNAct" id="Q12293">
    <property type="molecule type" value="protein"/>
</dbReference>
<dbReference type="GO" id="GO:0005737">
    <property type="term" value="C:cytoplasm"/>
    <property type="evidence" value="ECO:0007669"/>
    <property type="project" value="UniProtKB-SubCell"/>
</dbReference>
<dbReference type="GO" id="GO:0003723">
    <property type="term" value="F:RNA binding"/>
    <property type="evidence" value="ECO:0007669"/>
    <property type="project" value="UniProtKB-KW"/>
</dbReference>
<dbReference type="GO" id="GO:0075523">
    <property type="term" value="P:viral translational frameshifting"/>
    <property type="evidence" value="ECO:0007669"/>
    <property type="project" value="UniProtKB-KW"/>
</dbReference>
<dbReference type="InterPro" id="IPR015820">
    <property type="entry name" value="TYA"/>
</dbReference>
<dbReference type="Pfam" id="PF01021">
    <property type="entry name" value="TYA"/>
    <property type="match status" value="1"/>
</dbReference>
<protein>
    <recommendedName>
        <fullName>Transposon Ty2-OR2 Gag polyprotein</fullName>
        <shortName>TY2A</shortName>
        <shortName>TYA</shortName>
        <shortName>Transposon Ty2 protein A</shortName>
    </recommendedName>
    <component>
        <recommendedName>
            <fullName>Capsid protein</fullName>
            <shortName>CA</shortName>
        </recommendedName>
    </component>
    <component>
        <recommendedName>
            <fullName>Gag-p4</fullName>
        </recommendedName>
    </component>
</protein>
<comment type="function">
    <text evidence="1">Capsid protein (CA) is the structural component of the virus-like particle (VLP), forming the shell that encapsulates the retrotransposons dimeric RNA genome. The particles are assembled from trimer-clustered units and there are holes in the capsid shells that allow for the diffusion of macromolecules. CA also has nucleocapsid-like chaperone activity, promoting primer tRNA(i)-Met annealing to the multipartite primer-binding site (PBS), dimerization of Ty2 RNA and initiation of reverse transcription (By similarity).</text>
</comment>
<comment type="subunit">
    <text evidence="1">Homotrimer.</text>
</comment>
<comment type="subcellular location">
    <subcellularLocation>
        <location evidence="1">Cytoplasm</location>
    </subcellularLocation>
</comment>
<comment type="alternative products">
    <event type="ribosomal frameshifting"/>
    <isoform>
        <id>Q12293-1</id>
        <name>Transposon Ty2-OR2 Gag polyprotein</name>
        <sequence type="displayed"/>
    </isoform>
    <isoform>
        <id>Q12501-1</id>
        <name>Transposon Ty2-OR2 Gag-Pol polyprotein</name>
        <sequence type="external"/>
    </isoform>
    <text>The Gag-Pol polyprotein is generated by a +1 ribosomal frameshift.</text>
</comment>
<comment type="domain">
    <text evidence="1">The C-terminal RNA-binding region of CA is sufficient for all its nucleocapsid-like chaperone activities.</text>
</comment>
<comment type="miscellaneous">
    <text>Retrotransposons are mobile genetic entities that are able to replicate via an RNA intermediate and a reverse transcription step. In contrast to retroviruses, retrotransposons are non-infectious, lack an envelope and remain intracellular. Ty2 retrotransposons belong to the copia elements (pseudoviridae).</text>
</comment>
<comment type="miscellaneous">
    <molecule>Isoform Transposon Ty2-OR2 Gag polyprotein</molecule>
    <text>Produced by conventional translation.</text>
</comment>
<name>YO22A_YEAST</name>
<feature type="chain" id="PRO_0000279353" description="Transposon Ty2-OR2 Gag polyprotein">
    <location>
        <begin position="1"/>
        <end position="438"/>
    </location>
</feature>
<feature type="chain" id="PRO_0000279354" description="Capsid protein" evidence="1">
    <location>
        <begin position="1"/>
        <end position="397"/>
    </location>
</feature>
<feature type="peptide" id="PRO_0000279355" description="Gag-p4" evidence="1">
    <location>
        <begin position="398"/>
        <end position="438"/>
    </location>
</feature>
<feature type="region of interest" description="Disordered" evidence="2">
    <location>
        <begin position="1"/>
        <end position="88"/>
    </location>
</feature>
<feature type="region of interest" description="RNA-binding" evidence="1">
    <location>
        <begin position="295"/>
        <end position="397"/>
    </location>
</feature>
<feature type="region of interest" description="Disordered" evidence="2">
    <location>
        <begin position="365"/>
        <end position="397"/>
    </location>
</feature>
<feature type="region of interest" description="Disordered" evidence="2">
    <location>
        <begin position="419"/>
        <end position="438"/>
    </location>
</feature>
<feature type="compositionally biased region" description="Polar residues" evidence="2">
    <location>
        <begin position="19"/>
        <end position="39"/>
    </location>
</feature>
<feature type="compositionally biased region" description="Polar residues" evidence="2">
    <location>
        <begin position="49"/>
        <end position="60"/>
    </location>
</feature>
<feature type="compositionally biased region" description="Low complexity" evidence="2">
    <location>
        <begin position="369"/>
        <end position="381"/>
    </location>
</feature>
<feature type="site" description="Cleavage; by Ty2 protease" evidence="1">
    <location>
        <begin position="397"/>
        <end position="398"/>
    </location>
</feature>
<keyword id="KW-0963">Cytoplasm</keyword>
<keyword id="KW-1185">Reference proteome</keyword>
<keyword id="KW-0688">Ribosomal frameshifting</keyword>
<keyword id="KW-0694">RNA-binding</keyword>
<keyword id="KW-0814">Transposable element</keyword>
<reference key="1">
    <citation type="journal article" date="1997" name="Nature">
        <title>The nucleotide sequence of Saccharomyces cerevisiae chromosome XV.</title>
        <authorList>
            <person name="Dujon B."/>
            <person name="Albermann K."/>
            <person name="Aldea M."/>
            <person name="Alexandraki D."/>
            <person name="Ansorge W."/>
            <person name="Arino J."/>
            <person name="Benes V."/>
            <person name="Bohn C."/>
            <person name="Bolotin-Fukuhara M."/>
            <person name="Bordonne R."/>
            <person name="Boyer J."/>
            <person name="Camasses A."/>
            <person name="Casamayor A."/>
            <person name="Casas C."/>
            <person name="Cheret G."/>
            <person name="Cziepluch C."/>
            <person name="Daignan-Fornier B."/>
            <person name="Dang V.-D."/>
            <person name="de Haan M."/>
            <person name="Delius H."/>
            <person name="Durand P."/>
            <person name="Fairhead C."/>
            <person name="Feldmann H."/>
            <person name="Gaillon L."/>
            <person name="Galisson F."/>
            <person name="Gamo F.-J."/>
            <person name="Gancedo C."/>
            <person name="Goffeau A."/>
            <person name="Goulding S.E."/>
            <person name="Grivell L.A."/>
            <person name="Habbig B."/>
            <person name="Hand N.J."/>
            <person name="Hani J."/>
            <person name="Hattenhorst U."/>
            <person name="Hebling U."/>
            <person name="Hernando Y."/>
            <person name="Herrero E."/>
            <person name="Heumann K."/>
            <person name="Hiesel R."/>
            <person name="Hilger F."/>
            <person name="Hofmann B."/>
            <person name="Hollenberg C.P."/>
            <person name="Hughes B."/>
            <person name="Jauniaux J.-C."/>
            <person name="Kalogeropoulos A."/>
            <person name="Katsoulou C."/>
            <person name="Kordes E."/>
            <person name="Lafuente M.J."/>
            <person name="Landt O."/>
            <person name="Louis E.J."/>
            <person name="Maarse A.C."/>
            <person name="Madania A."/>
            <person name="Mannhaupt G."/>
            <person name="Marck C."/>
            <person name="Martin R.P."/>
            <person name="Mewes H.-W."/>
            <person name="Michaux G."/>
            <person name="Paces V."/>
            <person name="Parle-McDermott A.G."/>
            <person name="Pearson B.M."/>
            <person name="Perrin A."/>
            <person name="Pettersson B."/>
            <person name="Poch O."/>
            <person name="Pohl T.M."/>
            <person name="Poirey R."/>
            <person name="Portetelle D."/>
            <person name="Pujol A."/>
            <person name="Purnelle B."/>
            <person name="Ramezani Rad M."/>
            <person name="Rechmann S."/>
            <person name="Schwager C."/>
            <person name="Schweizer M."/>
            <person name="Sor F."/>
            <person name="Sterky F."/>
            <person name="Tarassov I.A."/>
            <person name="Teodoru C."/>
            <person name="Tettelin H."/>
            <person name="Thierry A."/>
            <person name="Tobiasch E."/>
            <person name="Tzermia M."/>
            <person name="Uhlen M."/>
            <person name="Unseld M."/>
            <person name="Valens M."/>
            <person name="Vandenbol M."/>
            <person name="Vetter I."/>
            <person name="Vlcek C."/>
            <person name="Voet M."/>
            <person name="Volckaert G."/>
            <person name="Voss H."/>
            <person name="Wambutt R."/>
            <person name="Wedler H."/>
            <person name="Wiemann S."/>
            <person name="Winsor B."/>
            <person name="Wolfe K.H."/>
            <person name="Zollner A."/>
            <person name="Zumstein E."/>
            <person name="Kleine K."/>
        </authorList>
    </citation>
    <scope>NUCLEOTIDE SEQUENCE [LARGE SCALE GENOMIC DNA]</scope>
    <source>
        <strain>ATCC 204508 / S288c</strain>
    </source>
</reference>
<reference key="2">
    <citation type="journal article" date="2014" name="G3 (Bethesda)">
        <title>The reference genome sequence of Saccharomyces cerevisiae: Then and now.</title>
        <authorList>
            <person name="Engel S.R."/>
            <person name="Dietrich F.S."/>
            <person name="Fisk D.G."/>
            <person name="Binkley G."/>
            <person name="Balakrishnan R."/>
            <person name="Costanzo M.C."/>
            <person name="Dwight S.S."/>
            <person name="Hitz B.C."/>
            <person name="Karra K."/>
            <person name="Nash R.S."/>
            <person name="Weng S."/>
            <person name="Wong E.D."/>
            <person name="Lloyd P."/>
            <person name="Skrzypek M.S."/>
            <person name="Miyasato S.R."/>
            <person name="Simison M."/>
            <person name="Cherry J.M."/>
        </authorList>
    </citation>
    <scope>GENOME REANNOTATION</scope>
    <source>
        <strain>ATCC 204508 / S288c</strain>
    </source>
</reference>
<reference key="3">
    <citation type="journal article" date="1998" name="Genome Res.">
        <title>Transposable elements and genome organization: a comprehensive survey of retrotransposons revealed by the complete Saccharomyces cerevisiae genome sequence.</title>
        <authorList>
            <person name="Kim J.M."/>
            <person name="Vanguri S."/>
            <person name="Boeke J.D."/>
            <person name="Gabriel A."/>
            <person name="Voytas D.F."/>
        </authorList>
    </citation>
    <scope>NOMENCLATURE</scope>
</reference>
<reference key="4">
    <citation type="journal article" date="2005" name="Cytogenet. Genome Res.">
        <title>Happy together: the life and times of Ty retrotransposons and their hosts.</title>
        <authorList>
            <person name="Lesage P."/>
            <person name="Todeschini A.L."/>
        </authorList>
    </citation>
    <scope>REVIEW</scope>
</reference>
<gene>
    <name type="primary">TY2A-OR2</name>
    <name type="synonym">YORWTy2-2 GAG</name>
    <name type="ordered locus">YOR343W-A</name>
    <name type="ORF">O6301</name>
</gene>
<proteinExistence type="inferred from homology"/>
<accession>Q12293</accession>
<accession>D6W339</accession>
<organism>
    <name type="scientific">Saccharomyces cerevisiae (strain ATCC 204508 / S288c)</name>
    <name type="common">Baker's yeast</name>
    <dbReference type="NCBI Taxonomy" id="559292"/>
    <lineage>
        <taxon>Eukaryota</taxon>
        <taxon>Fungi</taxon>
        <taxon>Dikarya</taxon>
        <taxon>Ascomycota</taxon>
        <taxon>Saccharomycotina</taxon>
        <taxon>Saccharomycetes</taxon>
        <taxon>Saccharomycetales</taxon>
        <taxon>Saccharomycetaceae</taxon>
        <taxon>Saccharomyces</taxon>
    </lineage>
</organism>
<evidence type="ECO:0000250" key="1"/>
<evidence type="ECO:0000256" key="2">
    <source>
        <dbReference type="SAM" id="MobiDB-lite"/>
    </source>
</evidence>